<evidence type="ECO:0000255" key="1">
    <source>
        <dbReference type="HAMAP-Rule" id="MF_00457"/>
    </source>
</evidence>
<reference key="1">
    <citation type="journal article" date="2009" name="Stand. Genomic Sci.">
        <title>Complete genome sequence of Methanoculleus marisnigri Romesser et al. 1981 type strain JR1.</title>
        <authorList>
            <person name="Anderson I.J."/>
            <person name="Sieprawska-Lupa M."/>
            <person name="Lapidus A."/>
            <person name="Nolan M."/>
            <person name="Copeland A."/>
            <person name="Glavina Del Rio T."/>
            <person name="Tice H."/>
            <person name="Dalin E."/>
            <person name="Barry K."/>
            <person name="Saunders E."/>
            <person name="Han C."/>
            <person name="Brettin T."/>
            <person name="Detter J.C."/>
            <person name="Bruce D."/>
            <person name="Mikhailova N."/>
            <person name="Pitluck S."/>
            <person name="Hauser L."/>
            <person name="Land M."/>
            <person name="Lucas S."/>
            <person name="Richardson P."/>
            <person name="Whitman W.B."/>
            <person name="Kyrpides N.C."/>
        </authorList>
    </citation>
    <scope>NUCLEOTIDE SEQUENCE [LARGE SCALE GENOMIC DNA]</scope>
    <source>
        <strain>ATCC 35101 / DSM 1498 / JR1</strain>
    </source>
</reference>
<dbReference type="EMBL" id="CP000562">
    <property type="protein sequence ID" value="ABN57350.1"/>
    <property type="molecule type" value="Genomic_DNA"/>
</dbReference>
<dbReference type="RefSeq" id="WP_011844261.1">
    <property type="nucleotide sequence ID" value="NC_009051.1"/>
</dbReference>
<dbReference type="SMR" id="A3CVF0"/>
<dbReference type="STRING" id="368407.Memar_1421"/>
<dbReference type="GeneID" id="4847102"/>
<dbReference type="KEGG" id="mem:Memar_1421"/>
<dbReference type="eggNOG" id="arCOG00497">
    <property type="taxonomic scope" value="Archaea"/>
</dbReference>
<dbReference type="HOGENOM" id="CLU_070010_4_0_2"/>
<dbReference type="OrthoDB" id="28313at2157"/>
<dbReference type="Proteomes" id="UP000002146">
    <property type="component" value="Chromosome"/>
</dbReference>
<dbReference type="GO" id="GO:0016787">
    <property type="term" value="F:hydrolase activity"/>
    <property type="evidence" value="ECO:0007669"/>
    <property type="project" value="UniProtKB-UniRule"/>
</dbReference>
<dbReference type="Gene3D" id="3.60.15.10">
    <property type="entry name" value="Ribonuclease Z/Hydroxyacylglutathione hydrolase-like"/>
    <property type="match status" value="1"/>
</dbReference>
<dbReference type="HAMAP" id="MF_00457">
    <property type="entry name" value="UPF0173"/>
    <property type="match status" value="1"/>
</dbReference>
<dbReference type="InterPro" id="IPR001279">
    <property type="entry name" value="Metallo-B-lactamas"/>
</dbReference>
<dbReference type="InterPro" id="IPR036866">
    <property type="entry name" value="RibonucZ/Hydroxyglut_hydro"/>
</dbReference>
<dbReference type="InterPro" id="IPR022877">
    <property type="entry name" value="UPF0173"/>
</dbReference>
<dbReference type="InterPro" id="IPR050114">
    <property type="entry name" value="UPF0173_UPF0282_UlaG_hydrolase"/>
</dbReference>
<dbReference type="NCBIfam" id="NF001911">
    <property type="entry name" value="PRK00685.1"/>
    <property type="match status" value="1"/>
</dbReference>
<dbReference type="PANTHER" id="PTHR43546:SF3">
    <property type="entry name" value="UPF0173 METAL-DEPENDENT HYDROLASE MJ1163"/>
    <property type="match status" value="1"/>
</dbReference>
<dbReference type="PANTHER" id="PTHR43546">
    <property type="entry name" value="UPF0173 METAL-DEPENDENT HYDROLASE MJ1163-RELATED"/>
    <property type="match status" value="1"/>
</dbReference>
<dbReference type="Pfam" id="PF13483">
    <property type="entry name" value="Lactamase_B_3"/>
    <property type="match status" value="1"/>
</dbReference>
<dbReference type="SMART" id="SM00849">
    <property type="entry name" value="Lactamase_B"/>
    <property type="match status" value="1"/>
</dbReference>
<dbReference type="SUPFAM" id="SSF56281">
    <property type="entry name" value="Metallo-hydrolase/oxidoreductase"/>
    <property type="match status" value="1"/>
</dbReference>
<name>Y1421_METMJ</name>
<comment type="similarity">
    <text evidence="1">Belongs to the UPF0173 family.</text>
</comment>
<feature type="chain" id="PRO_0000367232" description="UPF0173 metal-dependent hydrolase Memar_1421">
    <location>
        <begin position="1"/>
        <end position="224"/>
    </location>
</feature>
<keyword id="KW-0378">Hydrolase</keyword>
<proteinExistence type="inferred from homology"/>
<organism>
    <name type="scientific">Methanoculleus marisnigri (strain ATCC 35101 / DSM 1498 / JR1)</name>
    <dbReference type="NCBI Taxonomy" id="368407"/>
    <lineage>
        <taxon>Archaea</taxon>
        <taxon>Methanobacteriati</taxon>
        <taxon>Methanobacteriota</taxon>
        <taxon>Stenosarchaea group</taxon>
        <taxon>Methanomicrobia</taxon>
        <taxon>Methanomicrobiales</taxon>
        <taxon>Methanomicrobiaceae</taxon>
        <taxon>Methanoculleus</taxon>
    </lineage>
</organism>
<accession>A3CVF0</accession>
<gene>
    <name type="ordered locus">Memar_1421</name>
</gene>
<sequence>MRLTWLGHACFSLAGSRTIVIDPFIPEGSLPAEPDIVAVTHAHADHLGIATELSKKTVAVNEVAKYLKTKGVPAEPMNLGGTITVDGVRFTMTPALHSSWLEDEGPGFYGGVAAGFVITMDGVSVYHAGDTALFSDMQLIRDLYRPDVALLPVGGCFTMGPEEAMIAARYIGAPLVVPMHYDTFPAIRQNLEEFKRTIERTTSIRVALLSPGESIEVGPEKAGE</sequence>
<protein>
    <recommendedName>
        <fullName evidence="1">UPF0173 metal-dependent hydrolase Memar_1421</fullName>
    </recommendedName>
</protein>